<comment type="catalytic activity">
    <reaction>
        <text>tRNA(Cys) + L-cysteine + ATP = L-cysteinyl-tRNA(Cys) + AMP + diphosphate</text>
        <dbReference type="Rhea" id="RHEA:17773"/>
        <dbReference type="Rhea" id="RHEA-COMP:9661"/>
        <dbReference type="Rhea" id="RHEA-COMP:9679"/>
        <dbReference type="ChEBI" id="CHEBI:30616"/>
        <dbReference type="ChEBI" id="CHEBI:33019"/>
        <dbReference type="ChEBI" id="CHEBI:35235"/>
        <dbReference type="ChEBI" id="CHEBI:78442"/>
        <dbReference type="ChEBI" id="CHEBI:78517"/>
        <dbReference type="ChEBI" id="CHEBI:456215"/>
        <dbReference type="EC" id="6.1.1.16"/>
    </reaction>
</comment>
<comment type="cofactor">
    <cofactor evidence="1">
        <name>Zn(2+)</name>
        <dbReference type="ChEBI" id="CHEBI:29105"/>
    </cofactor>
    <text evidence="1">Binds 1 zinc ion per subunit.</text>
</comment>
<comment type="subcellular location">
    <subcellularLocation>
        <location evidence="1">Cytoplasm</location>
    </subcellularLocation>
</comment>
<comment type="similarity">
    <text evidence="2">Belongs to the class-I aminoacyl-tRNA synthetase family.</text>
</comment>
<evidence type="ECO:0000250" key="1"/>
<evidence type="ECO:0000305" key="2"/>
<organism>
    <name type="scientific">Pyrococcus abyssi (strain GE5 / Orsay)</name>
    <dbReference type="NCBI Taxonomy" id="272844"/>
    <lineage>
        <taxon>Archaea</taxon>
        <taxon>Methanobacteriati</taxon>
        <taxon>Methanobacteriota</taxon>
        <taxon>Thermococci</taxon>
        <taxon>Thermococcales</taxon>
        <taxon>Thermococcaceae</taxon>
        <taxon>Pyrococcus</taxon>
    </lineage>
</organism>
<proteinExistence type="inferred from homology"/>
<sequence length="477" mass="55962">MGIKVYNTLTRKKEELKPLRDGEVRMYVCGPTVYDYPHLGHARTYIAFDVIRRYLEHRGFTVLMVMNFTDIDDKIIKRAQETGEDPGKLAERFIKVFLEDMNALKVKPADIYPRVTEHIDDIIEFIKKLKEKGYAYEGSDGVYFEVQKFKDYGKLSGVKIEELRKGARVEPGEGKKNPEDFALWKKAKPGEPKWDSPWGEGRPGWHIECSVMSSKYLGESFDIHGGGNDLIFPHHENEIAQSEACFGHEWVRYWLHTGFVMVKGEKMSKSLGNFVTVRELLQRYSPEVIRLFVLQKHYRSPLDYTEEGLQHAKNNLERLYNTLENIRIAMRNAELSYKWSEKDFEAYEAIREARKKFYDAMDDDFNTAEALKAVFEVSNAINKYILEVDKPKESILRKALEFFKVVSEVFGIFEDYFKEEKKGEEEKLIELLVEVRKQLRKEKRFDLADKIREELRKLGIQLEDKGQETVWKRVKVS</sequence>
<accession>Q9UYV2</accession>
<accession>G8ZHL1</accession>
<feature type="chain" id="PRO_0000159540" description="Cysteine--tRNA ligase">
    <location>
        <begin position="1"/>
        <end position="477"/>
    </location>
</feature>
<feature type="short sequence motif" description="'HIGH' region">
    <location>
        <begin position="31"/>
        <end position="41"/>
    </location>
</feature>
<feature type="short sequence motif" description="'KMSKS' region">
    <location>
        <begin position="266"/>
        <end position="270"/>
    </location>
</feature>
<feature type="binding site" evidence="1">
    <location>
        <position position="29"/>
    </location>
    <ligand>
        <name>Zn(2+)</name>
        <dbReference type="ChEBI" id="CHEBI:29105"/>
    </ligand>
</feature>
<feature type="binding site" evidence="1">
    <location>
        <position position="209"/>
    </location>
    <ligand>
        <name>Zn(2+)</name>
        <dbReference type="ChEBI" id="CHEBI:29105"/>
    </ligand>
</feature>
<feature type="binding site" evidence="1">
    <location>
        <position position="234"/>
    </location>
    <ligand>
        <name>Zn(2+)</name>
        <dbReference type="ChEBI" id="CHEBI:29105"/>
    </ligand>
</feature>
<feature type="binding site" evidence="1">
    <location>
        <position position="238"/>
    </location>
    <ligand>
        <name>Zn(2+)</name>
        <dbReference type="ChEBI" id="CHEBI:29105"/>
    </ligand>
</feature>
<feature type="binding site" evidence="1">
    <location>
        <position position="269"/>
    </location>
    <ligand>
        <name>ATP</name>
        <dbReference type="ChEBI" id="CHEBI:30616"/>
    </ligand>
</feature>
<reference key="1">
    <citation type="journal article" date="2003" name="Mol. Microbiol.">
        <title>An integrated analysis of the genome of the hyperthermophilic archaeon Pyrococcus abyssi.</title>
        <authorList>
            <person name="Cohen G.N."/>
            <person name="Barbe V."/>
            <person name="Flament D."/>
            <person name="Galperin M."/>
            <person name="Heilig R."/>
            <person name="Lecompte O."/>
            <person name="Poch O."/>
            <person name="Prieur D."/>
            <person name="Querellou J."/>
            <person name="Ripp R."/>
            <person name="Thierry J.-C."/>
            <person name="Van der Oost J."/>
            <person name="Weissenbach J."/>
            <person name="Zivanovic Y."/>
            <person name="Forterre P."/>
        </authorList>
    </citation>
    <scope>NUCLEOTIDE SEQUENCE [LARGE SCALE GENOMIC DNA]</scope>
    <source>
        <strain>GE5 / Orsay</strain>
    </source>
</reference>
<reference key="2">
    <citation type="journal article" date="2012" name="Curr. Microbiol.">
        <title>Re-annotation of two hyperthermophilic archaea Pyrococcus abyssi GE5 and Pyrococcus furiosus DSM 3638.</title>
        <authorList>
            <person name="Gao J."/>
            <person name="Wang J."/>
        </authorList>
    </citation>
    <scope>GENOME REANNOTATION</scope>
    <source>
        <strain>GE5 / Orsay</strain>
    </source>
</reference>
<name>SYC_PYRAB</name>
<keyword id="KW-0030">Aminoacyl-tRNA synthetase</keyword>
<keyword id="KW-0067">ATP-binding</keyword>
<keyword id="KW-0963">Cytoplasm</keyword>
<keyword id="KW-0436">Ligase</keyword>
<keyword id="KW-0479">Metal-binding</keyword>
<keyword id="KW-0547">Nucleotide-binding</keyword>
<keyword id="KW-0648">Protein biosynthesis</keyword>
<keyword id="KW-0862">Zinc</keyword>
<dbReference type="EC" id="6.1.1.16"/>
<dbReference type="EMBL" id="AJ248287">
    <property type="protein sequence ID" value="CAB50310.1"/>
    <property type="molecule type" value="Genomic_DNA"/>
</dbReference>
<dbReference type="EMBL" id="HE613800">
    <property type="protein sequence ID" value="CCE70848.1"/>
    <property type="molecule type" value="Genomic_DNA"/>
</dbReference>
<dbReference type="PIR" id="A75052">
    <property type="entry name" value="A75052"/>
</dbReference>
<dbReference type="RefSeq" id="WP_010868520.1">
    <property type="nucleotide sequence ID" value="NC_000868.1"/>
</dbReference>
<dbReference type="SMR" id="Q9UYV2"/>
<dbReference type="STRING" id="272844.PAB0931"/>
<dbReference type="KEGG" id="pab:PAB0931"/>
<dbReference type="PATRIC" id="fig|272844.11.peg.1493"/>
<dbReference type="eggNOG" id="arCOG00486">
    <property type="taxonomic scope" value="Archaea"/>
</dbReference>
<dbReference type="HOGENOM" id="CLU_013528_0_1_2"/>
<dbReference type="OrthoDB" id="9445at2157"/>
<dbReference type="PhylomeDB" id="Q9UYV2"/>
<dbReference type="Proteomes" id="UP000000810">
    <property type="component" value="Chromosome"/>
</dbReference>
<dbReference type="Proteomes" id="UP000009139">
    <property type="component" value="Chromosome"/>
</dbReference>
<dbReference type="GO" id="GO:0005737">
    <property type="term" value="C:cytoplasm"/>
    <property type="evidence" value="ECO:0007669"/>
    <property type="project" value="UniProtKB-SubCell"/>
</dbReference>
<dbReference type="GO" id="GO:0005524">
    <property type="term" value="F:ATP binding"/>
    <property type="evidence" value="ECO:0007669"/>
    <property type="project" value="UniProtKB-UniRule"/>
</dbReference>
<dbReference type="GO" id="GO:0004817">
    <property type="term" value="F:cysteine-tRNA ligase activity"/>
    <property type="evidence" value="ECO:0007669"/>
    <property type="project" value="UniProtKB-UniRule"/>
</dbReference>
<dbReference type="GO" id="GO:0008270">
    <property type="term" value="F:zinc ion binding"/>
    <property type="evidence" value="ECO:0007669"/>
    <property type="project" value="UniProtKB-UniRule"/>
</dbReference>
<dbReference type="GO" id="GO:0006423">
    <property type="term" value="P:cysteinyl-tRNA aminoacylation"/>
    <property type="evidence" value="ECO:0007669"/>
    <property type="project" value="UniProtKB-UniRule"/>
</dbReference>
<dbReference type="CDD" id="cd00672">
    <property type="entry name" value="CysRS_core"/>
    <property type="match status" value="1"/>
</dbReference>
<dbReference type="FunFam" id="3.40.50.620:FF:000009">
    <property type="entry name" value="Cysteine--tRNA ligase"/>
    <property type="match status" value="1"/>
</dbReference>
<dbReference type="Gene3D" id="1.20.120.1910">
    <property type="entry name" value="Cysteine-tRNA ligase, C-terminal anti-codon recognition domain"/>
    <property type="match status" value="1"/>
</dbReference>
<dbReference type="Gene3D" id="3.40.50.620">
    <property type="entry name" value="HUPs"/>
    <property type="match status" value="1"/>
</dbReference>
<dbReference type="HAMAP" id="MF_00041">
    <property type="entry name" value="Cys_tRNA_synth"/>
    <property type="match status" value="1"/>
</dbReference>
<dbReference type="InterPro" id="IPR015803">
    <property type="entry name" value="Cys-tRNA-ligase"/>
</dbReference>
<dbReference type="InterPro" id="IPR015273">
    <property type="entry name" value="Cys-tRNA-synt_Ia_DALR"/>
</dbReference>
<dbReference type="InterPro" id="IPR024909">
    <property type="entry name" value="Cys-tRNA/MSH_ligase"/>
</dbReference>
<dbReference type="InterPro" id="IPR014729">
    <property type="entry name" value="Rossmann-like_a/b/a_fold"/>
</dbReference>
<dbReference type="InterPro" id="IPR032678">
    <property type="entry name" value="tRNA-synt_1_cat_dom"/>
</dbReference>
<dbReference type="InterPro" id="IPR009080">
    <property type="entry name" value="tRNAsynth_Ia_anticodon-bd"/>
</dbReference>
<dbReference type="NCBIfam" id="TIGR00435">
    <property type="entry name" value="cysS"/>
    <property type="match status" value="1"/>
</dbReference>
<dbReference type="PANTHER" id="PTHR10890:SF3">
    <property type="entry name" value="CYSTEINE--TRNA LIGASE, CYTOPLASMIC"/>
    <property type="match status" value="1"/>
</dbReference>
<dbReference type="PANTHER" id="PTHR10890">
    <property type="entry name" value="CYSTEINYL-TRNA SYNTHETASE"/>
    <property type="match status" value="1"/>
</dbReference>
<dbReference type="Pfam" id="PF09190">
    <property type="entry name" value="DALR_2"/>
    <property type="match status" value="1"/>
</dbReference>
<dbReference type="Pfam" id="PF01406">
    <property type="entry name" value="tRNA-synt_1e"/>
    <property type="match status" value="1"/>
</dbReference>
<dbReference type="PRINTS" id="PR00983">
    <property type="entry name" value="TRNASYNTHCYS"/>
</dbReference>
<dbReference type="SMART" id="SM00840">
    <property type="entry name" value="DALR_2"/>
    <property type="match status" value="1"/>
</dbReference>
<dbReference type="SUPFAM" id="SSF47323">
    <property type="entry name" value="Anticodon-binding domain of a subclass of class I aminoacyl-tRNA synthetases"/>
    <property type="match status" value="1"/>
</dbReference>
<dbReference type="SUPFAM" id="SSF52374">
    <property type="entry name" value="Nucleotidylyl transferase"/>
    <property type="match status" value="1"/>
</dbReference>
<gene>
    <name type="primary">cysS</name>
    <name type="ordered locus">PYRAB14050</name>
    <name type="ORF">PAB0931</name>
</gene>
<protein>
    <recommendedName>
        <fullName>Cysteine--tRNA ligase</fullName>
        <ecNumber>6.1.1.16</ecNumber>
    </recommendedName>
    <alternativeName>
        <fullName>Cysteinyl-tRNA synthetase</fullName>
        <shortName>CysRS</shortName>
    </alternativeName>
</protein>